<accession>P34746</accession>
<accession>Q9PRH7</accession>
<dbReference type="EMBL" id="AF033805">
    <property type="protein sequence ID" value="AAC77875.1"/>
    <property type="molecule type" value="mRNA"/>
</dbReference>
<dbReference type="EMBL" id="AF033806">
    <property type="protein sequence ID" value="AAC77876.1"/>
    <property type="molecule type" value="Genomic_DNA"/>
</dbReference>
<dbReference type="PIR" id="A61123">
    <property type="entry name" value="A61123"/>
</dbReference>
<dbReference type="SMR" id="P34746"/>
<dbReference type="GO" id="GO:0005615">
    <property type="term" value="C:extracellular space"/>
    <property type="evidence" value="ECO:0007669"/>
    <property type="project" value="InterPro"/>
</dbReference>
<dbReference type="GO" id="GO:0070186">
    <property type="term" value="F:growth hormone activity"/>
    <property type="evidence" value="ECO:0007669"/>
    <property type="project" value="TreeGrafter"/>
</dbReference>
<dbReference type="GO" id="GO:0005131">
    <property type="term" value="F:growth hormone receptor binding"/>
    <property type="evidence" value="ECO:0000315"/>
    <property type="project" value="AgBase"/>
</dbReference>
<dbReference type="GO" id="GO:0046872">
    <property type="term" value="F:metal ion binding"/>
    <property type="evidence" value="ECO:0007669"/>
    <property type="project" value="UniProtKB-KW"/>
</dbReference>
<dbReference type="GO" id="GO:0048513">
    <property type="term" value="P:animal organ development"/>
    <property type="evidence" value="ECO:0007669"/>
    <property type="project" value="TreeGrafter"/>
</dbReference>
<dbReference type="GO" id="GO:0060396">
    <property type="term" value="P:growth hormone receptor signaling pathway"/>
    <property type="evidence" value="ECO:0007669"/>
    <property type="project" value="TreeGrafter"/>
</dbReference>
<dbReference type="GO" id="GO:0045927">
    <property type="term" value="P:positive regulation of growth"/>
    <property type="evidence" value="ECO:0007669"/>
    <property type="project" value="TreeGrafter"/>
</dbReference>
<dbReference type="GO" id="GO:0046427">
    <property type="term" value="P:positive regulation of receptor signaling pathway via JAK-STAT"/>
    <property type="evidence" value="ECO:0007669"/>
    <property type="project" value="TreeGrafter"/>
</dbReference>
<dbReference type="GO" id="GO:0031667">
    <property type="term" value="P:response to nutrient levels"/>
    <property type="evidence" value="ECO:0007669"/>
    <property type="project" value="TreeGrafter"/>
</dbReference>
<dbReference type="CDD" id="cd10285">
    <property type="entry name" value="somatotropin_like"/>
    <property type="match status" value="1"/>
</dbReference>
<dbReference type="FunFam" id="1.20.1250.10:FF:000009">
    <property type="entry name" value="Growth hormone"/>
    <property type="match status" value="1"/>
</dbReference>
<dbReference type="Gene3D" id="1.20.1250.10">
    <property type="match status" value="1"/>
</dbReference>
<dbReference type="InterPro" id="IPR009079">
    <property type="entry name" value="4_helix_cytokine-like_core"/>
</dbReference>
<dbReference type="InterPro" id="IPR034975">
    <property type="entry name" value="Somatotropin"/>
</dbReference>
<dbReference type="InterPro" id="IPR001400">
    <property type="entry name" value="Somatotropin/Prolactin"/>
</dbReference>
<dbReference type="InterPro" id="IPR018116">
    <property type="entry name" value="Somatotropin_CS"/>
</dbReference>
<dbReference type="PANTHER" id="PTHR11417:SF2">
    <property type="entry name" value="SOMATOTROPIN"/>
    <property type="match status" value="1"/>
</dbReference>
<dbReference type="PANTHER" id="PTHR11417">
    <property type="entry name" value="SOMATOTROPIN,PROLACTIN"/>
    <property type="match status" value="1"/>
</dbReference>
<dbReference type="Pfam" id="PF00103">
    <property type="entry name" value="Hormone_1"/>
    <property type="match status" value="1"/>
</dbReference>
<dbReference type="PRINTS" id="PR00836">
    <property type="entry name" value="SOMATOTROPIN"/>
</dbReference>
<dbReference type="SUPFAM" id="SSF47266">
    <property type="entry name" value="4-helical cytokines"/>
    <property type="match status" value="1"/>
</dbReference>
<dbReference type="PROSITE" id="PS00266">
    <property type="entry name" value="SOMATOTROPIN_1"/>
    <property type="match status" value="1"/>
</dbReference>
<dbReference type="PROSITE" id="PS00338">
    <property type="entry name" value="SOMATOTROPIN_2"/>
    <property type="match status" value="1"/>
</dbReference>
<name>SOMA_OREMO</name>
<proteinExistence type="evidence at protein level"/>
<keyword id="KW-0903">Direct protein sequencing</keyword>
<keyword id="KW-1015">Disulfide bond</keyword>
<keyword id="KW-0372">Hormone</keyword>
<keyword id="KW-0479">Metal-binding</keyword>
<keyword id="KW-0873">Pyrrolidone carboxylic acid</keyword>
<keyword id="KW-0964">Secreted</keyword>
<keyword id="KW-0732">Signal</keyword>
<keyword id="KW-0862">Zinc</keyword>
<protein>
    <recommendedName>
        <fullName>Somatotropin</fullName>
    </recommendedName>
    <alternativeName>
        <fullName>Growth hormone</fullName>
    </alternativeName>
</protein>
<gene>
    <name type="primary">gh</name>
</gene>
<feature type="signal peptide" evidence="2">
    <location>
        <begin position="1"/>
        <end position="17"/>
    </location>
</feature>
<feature type="chain" id="PRO_0000033042" description="Somatotropin">
    <location>
        <begin position="18"/>
        <end position="204"/>
    </location>
</feature>
<feature type="binding site" evidence="1">
    <location>
        <position position="36"/>
    </location>
    <ligand>
        <name>Zn(2+)</name>
        <dbReference type="ChEBI" id="CHEBI:29105"/>
    </ligand>
</feature>
<feature type="binding site" evidence="1">
    <location>
        <position position="186"/>
    </location>
    <ligand>
        <name>Zn(2+)</name>
        <dbReference type="ChEBI" id="CHEBI:29105"/>
    </ligand>
</feature>
<feature type="modified residue" description="Pyrrolidone carboxylic acid" evidence="2">
    <location>
        <position position="18"/>
    </location>
</feature>
<feature type="disulfide bond" evidence="1">
    <location>
        <begin position="69"/>
        <end position="177"/>
    </location>
</feature>
<feature type="disulfide bond" evidence="1">
    <location>
        <begin position="194"/>
        <end position="202"/>
    </location>
</feature>
<feature type="sequence conflict" description="In Ref. 2; AA sequence." evidence="3" ref="2">
    <original>Y</original>
    <variation>H</variation>
    <location>
        <position position="38"/>
    </location>
</feature>
<evidence type="ECO:0000250" key="1"/>
<evidence type="ECO:0000269" key="2">
    <source>
    </source>
</evidence>
<evidence type="ECO:0000305" key="3"/>
<comment type="function">
    <text>Growth hormone plays an important role in growth control and involved in the regulation of several anabolic processes.</text>
</comment>
<comment type="subcellular location">
    <subcellularLocation>
        <location>Secreted</location>
    </subcellularLocation>
</comment>
<comment type="similarity">
    <text evidence="3">Belongs to the somatotropin/prolactin family.</text>
</comment>
<organism>
    <name type="scientific">Oreochromis mossambicus</name>
    <name type="common">Mozambique tilapia</name>
    <name type="synonym">Tilapia mossambica</name>
    <dbReference type="NCBI Taxonomy" id="8127"/>
    <lineage>
        <taxon>Eukaryota</taxon>
        <taxon>Metazoa</taxon>
        <taxon>Chordata</taxon>
        <taxon>Craniata</taxon>
        <taxon>Vertebrata</taxon>
        <taxon>Euteleostomi</taxon>
        <taxon>Actinopterygii</taxon>
        <taxon>Neopterygii</taxon>
        <taxon>Teleostei</taxon>
        <taxon>Neoteleostei</taxon>
        <taxon>Acanthomorphata</taxon>
        <taxon>Ovalentaria</taxon>
        <taxon>Cichlomorphae</taxon>
        <taxon>Cichliformes</taxon>
        <taxon>Cichlidae</taxon>
        <taxon>African cichlids</taxon>
        <taxon>Pseudocrenilabrinae</taxon>
        <taxon>Oreochromini</taxon>
        <taxon>Oreochromis</taxon>
    </lineage>
</organism>
<reference key="1">
    <citation type="submission" date="1997-11" db="EMBL/GenBank/DDBJ databases">
        <title>Production of recombinant Oreochromis mossambicus growth hormone (GH) polypeptides in E. coli cells and characterization of the molecular structure of the GH gene.</title>
        <authorList>
            <person name="Chen J.-Y."/>
            <person name="Chang C.-Y."/>
            <person name="Shen S.-C."/>
            <person name="Wang J.-I."/>
            <person name="Wu J.-L."/>
        </authorList>
    </citation>
    <scope>NUCLEOTIDE SEQUENCE [GENOMIC DNA / MRNA]</scope>
</reference>
<reference key="2">
    <citation type="journal article" date="1991" name="Gen. Comp. Endocrinol.">
        <title>Amino acid sequence of growth hormone isolated from medium of incubated pituitary glands of tilapia (Oreochromis mossambicus).</title>
        <authorList>
            <person name="Yamaguchi K."/>
            <person name="King D.S."/>
            <person name="Specker J.L."/>
            <person name="Nishioka R.S."/>
            <person name="Hirano T."/>
            <person name="Bern H.A."/>
        </authorList>
    </citation>
    <scope>PROTEIN SEQUENCE OF 18-204</scope>
    <scope>PYROGLUTAMATE FORMATION AT GLN-18</scope>
    <source>
        <tissue>Pituitary</tissue>
    </source>
</reference>
<sequence>MNSVVLQLSVVCLGVSSQQITDSQRLFSIAVNRVTHLYLLAQRLFSDFESSLQTEEQRQLNKIFLQDFCNSDYIISPIDKHETQRSSVLKLLSISYGLVESWEFPSRSLSGGSSLRNQISPRLSELKTGILLLIRANQDEAENYPDTDTLQHAPYGNYYQSLGGNESLRQTYELLACFKKDMHKVETYLTVAKCRLSPEANCTL</sequence>